<proteinExistence type="inferred from homology"/>
<gene>
    <name evidence="1" type="primary">rpsO</name>
    <name type="ordered locus">BCAH820_3819</name>
</gene>
<accession>B7JJ85</accession>
<protein>
    <recommendedName>
        <fullName evidence="1">Small ribosomal subunit protein uS15</fullName>
    </recommendedName>
    <alternativeName>
        <fullName evidence="2">30S ribosomal protein S15</fullName>
    </alternativeName>
</protein>
<keyword id="KW-0687">Ribonucleoprotein</keyword>
<keyword id="KW-0689">Ribosomal protein</keyword>
<keyword id="KW-0694">RNA-binding</keyword>
<keyword id="KW-0699">rRNA-binding</keyword>
<evidence type="ECO:0000255" key="1">
    <source>
        <dbReference type="HAMAP-Rule" id="MF_01343"/>
    </source>
</evidence>
<evidence type="ECO:0000305" key="2"/>
<name>RS15_BACC0</name>
<comment type="function">
    <text evidence="1">One of the primary rRNA binding proteins, it binds directly to 16S rRNA where it helps nucleate assembly of the platform of the 30S subunit by binding and bridging several RNA helices of the 16S rRNA.</text>
</comment>
<comment type="function">
    <text evidence="1">Forms an intersubunit bridge (bridge B4) with the 23S rRNA of the 50S subunit in the ribosome.</text>
</comment>
<comment type="subunit">
    <text evidence="1">Part of the 30S ribosomal subunit. Forms a bridge to the 50S subunit in the 70S ribosome, contacting the 23S rRNA.</text>
</comment>
<comment type="similarity">
    <text evidence="1">Belongs to the universal ribosomal protein uS15 family.</text>
</comment>
<dbReference type="EMBL" id="CP001283">
    <property type="protein sequence ID" value="ACK91625.1"/>
    <property type="molecule type" value="Genomic_DNA"/>
</dbReference>
<dbReference type="RefSeq" id="WP_001229392.1">
    <property type="nucleotide sequence ID" value="NC_011773.1"/>
</dbReference>
<dbReference type="SMR" id="B7JJ85"/>
<dbReference type="GeneID" id="93007304"/>
<dbReference type="KEGG" id="bcu:BCAH820_3819"/>
<dbReference type="HOGENOM" id="CLU_148518_0_0_9"/>
<dbReference type="Proteomes" id="UP000001363">
    <property type="component" value="Chromosome"/>
</dbReference>
<dbReference type="GO" id="GO:0022627">
    <property type="term" value="C:cytosolic small ribosomal subunit"/>
    <property type="evidence" value="ECO:0007669"/>
    <property type="project" value="TreeGrafter"/>
</dbReference>
<dbReference type="GO" id="GO:0019843">
    <property type="term" value="F:rRNA binding"/>
    <property type="evidence" value="ECO:0007669"/>
    <property type="project" value="UniProtKB-UniRule"/>
</dbReference>
<dbReference type="GO" id="GO:0003735">
    <property type="term" value="F:structural constituent of ribosome"/>
    <property type="evidence" value="ECO:0007669"/>
    <property type="project" value="InterPro"/>
</dbReference>
<dbReference type="GO" id="GO:0006412">
    <property type="term" value="P:translation"/>
    <property type="evidence" value="ECO:0007669"/>
    <property type="project" value="UniProtKB-UniRule"/>
</dbReference>
<dbReference type="CDD" id="cd00353">
    <property type="entry name" value="Ribosomal_S15p_S13e"/>
    <property type="match status" value="1"/>
</dbReference>
<dbReference type="FunFam" id="1.10.287.10:FF:000002">
    <property type="entry name" value="30S ribosomal protein S15"/>
    <property type="match status" value="1"/>
</dbReference>
<dbReference type="Gene3D" id="6.10.250.3130">
    <property type="match status" value="1"/>
</dbReference>
<dbReference type="Gene3D" id="1.10.287.10">
    <property type="entry name" value="S15/NS1, RNA-binding"/>
    <property type="match status" value="1"/>
</dbReference>
<dbReference type="HAMAP" id="MF_01343_B">
    <property type="entry name" value="Ribosomal_uS15_B"/>
    <property type="match status" value="1"/>
</dbReference>
<dbReference type="InterPro" id="IPR000589">
    <property type="entry name" value="Ribosomal_uS15"/>
</dbReference>
<dbReference type="InterPro" id="IPR005290">
    <property type="entry name" value="Ribosomal_uS15_bac-type"/>
</dbReference>
<dbReference type="InterPro" id="IPR009068">
    <property type="entry name" value="uS15_NS1_RNA-bd_sf"/>
</dbReference>
<dbReference type="NCBIfam" id="TIGR00952">
    <property type="entry name" value="S15_bact"/>
    <property type="match status" value="1"/>
</dbReference>
<dbReference type="PANTHER" id="PTHR23321">
    <property type="entry name" value="RIBOSOMAL PROTEIN S15, BACTERIAL AND ORGANELLAR"/>
    <property type="match status" value="1"/>
</dbReference>
<dbReference type="PANTHER" id="PTHR23321:SF26">
    <property type="entry name" value="SMALL RIBOSOMAL SUBUNIT PROTEIN US15M"/>
    <property type="match status" value="1"/>
</dbReference>
<dbReference type="Pfam" id="PF00312">
    <property type="entry name" value="Ribosomal_S15"/>
    <property type="match status" value="1"/>
</dbReference>
<dbReference type="SMART" id="SM01387">
    <property type="entry name" value="Ribosomal_S15"/>
    <property type="match status" value="1"/>
</dbReference>
<dbReference type="SUPFAM" id="SSF47060">
    <property type="entry name" value="S15/NS1 RNA-binding domain"/>
    <property type="match status" value="1"/>
</dbReference>
<dbReference type="PROSITE" id="PS00362">
    <property type="entry name" value="RIBOSOMAL_S15"/>
    <property type="match status" value="1"/>
</dbReference>
<feature type="chain" id="PRO_1000143073" description="Small ribosomal subunit protein uS15">
    <location>
        <begin position="1"/>
        <end position="89"/>
    </location>
</feature>
<organism>
    <name type="scientific">Bacillus cereus (strain AH820)</name>
    <dbReference type="NCBI Taxonomy" id="405535"/>
    <lineage>
        <taxon>Bacteria</taxon>
        <taxon>Bacillati</taxon>
        <taxon>Bacillota</taxon>
        <taxon>Bacilli</taxon>
        <taxon>Bacillales</taxon>
        <taxon>Bacillaceae</taxon>
        <taxon>Bacillus</taxon>
        <taxon>Bacillus cereus group</taxon>
    </lineage>
</organism>
<reference key="1">
    <citation type="submission" date="2008-10" db="EMBL/GenBank/DDBJ databases">
        <title>Genome sequence of Bacillus cereus AH820.</title>
        <authorList>
            <person name="Dodson R.J."/>
            <person name="Durkin A.S."/>
            <person name="Rosovitz M.J."/>
            <person name="Rasko D.A."/>
            <person name="Hoffmaster A."/>
            <person name="Ravel J."/>
            <person name="Sutton G."/>
        </authorList>
    </citation>
    <scope>NUCLEOTIDE SEQUENCE [LARGE SCALE GENOMIC DNA]</scope>
    <source>
        <strain>AH820</strain>
    </source>
</reference>
<sequence>MALTQERKNEIIAQFRTHETDTGSPEVQIAVLTEQINTLNEHLRTHKKDHHSRRGLLKMVGKRRNLLTYLRNSDITRYRELITKLGLRR</sequence>